<organism>
    <name type="scientific">Xanthomonas campestris pv. campestris (strain ATCC 33913 / DSM 3586 / NCPPB 528 / LMG 568 / P 25)</name>
    <dbReference type="NCBI Taxonomy" id="190485"/>
    <lineage>
        <taxon>Bacteria</taxon>
        <taxon>Pseudomonadati</taxon>
        <taxon>Pseudomonadota</taxon>
        <taxon>Gammaproteobacteria</taxon>
        <taxon>Lysobacterales</taxon>
        <taxon>Lysobacteraceae</taxon>
        <taxon>Xanthomonas</taxon>
    </lineage>
</organism>
<sequence>MSDTPRKLSLNKLSLKRDSAPEAPKLEERLHKVLAQAGLGSRRALEQRIADGLIKVNGAVAQTGMSVRSGDKIELDGRSFVASALTESSRVLVYNKPEGEVTTREDPEGRPTVFESLPALKGSRWIAIGRLDINTTGLLLLTTDGELANAMMHPSYEVEREYVVRVRAPEGEEKVPDSMIERLSRGVLLEDGGAKFDEIERIGGTDSHDWFRVVVKEGRNREVRRLWESQGCQVSRLKRTRYGKVSLPRELLRGQSVELAQEKVDALRAELKLEEGAPSALTLQPVIGQRRAAKSTVHVSRDGRSNAYVNGQTSGADEGRELRRFDNLREDRGGRGGRGKPGGFKGGLTVSGEAAAKQSQQRPFKQRGPAKGDRSLPDGNPAAFRSWYVPDGVSTGPSGHRNAGPGGAGTGQPRPYAKKGPGGARPGAGGQGRGAAGGQGQSQGQGQGQRKHPYGHPGNAPSFPSDHANPGFSPYGAARPANESYKRRPPRH</sequence>
<protein>
    <recommendedName>
        <fullName>Ribosomal large subunit pseudouridine synthase B</fullName>
        <ecNumber>5.4.99.22</ecNumber>
    </recommendedName>
    <alternativeName>
        <fullName>23S rRNA pseudouridine(2605) synthase</fullName>
    </alternativeName>
    <alternativeName>
        <fullName>rRNA pseudouridylate synthase B</fullName>
    </alternativeName>
    <alternativeName>
        <fullName>rRNA-uridine isomerase B</fullName>
    </alternativeName>
</protein>
<keyword id="KW-0413">Isomerase</keyword>
<keyword id="KW-1185">Reference proteome</keyword>
<keyword id="KW-0694">RNA-binding</keyword>
<keyword id="KW-0698">rRNA processing</keyword>
<reference key="1">
    <citation type="journal article" date="2002" name="Nature">
        <title>Comparison of the genomes of two Xanthomonas pathogens with differing host specificities.</title>
        <authorList>
            <person name="da Silva A.C.R."/>
            <person name="Ferro J.A."/>
            <person name="Reinach F.C."/>
            <person name="Farah C.S."/>
            <person name="Furlan L.R."/>
            <person name="Quaggio R.B."/>
            <person name="Monteiro-Vitorello C.B."/>
            <person name="Van Sluys M.A."/>
            <person name="Almeida N.F. Jr."/>
            <person name="Alves L.M.C."/>
            <person name="do Amaral A.M."/>
            <person name="Bertolini M.C."/>
            <person name="Camargo L.E.A."/>
            <person name="Camarotte G."/>
            <person name="Cannavan F."/>
            <person name="Cardozo J."/>
            <person name="Chambergo F."/>
            <person name="Ciapina L.P."/>
            <person name="Cicarelli R.M.B."/>
            <person name="Coutinho L.L."/>
            <person name="Cursino-Santos J.R."/>
            <person name="El-Dorry H."/>
            <person name="Faria J.B."/>
            <person name="Ferreira A.J.S."/>
            <person name="Ferreira R.C.C."/>
            <person name="Ferro M.I.T."/>
            <person name="Formighieri E.F."/>
            <person name="Franco M.C."/>
            <person name="Greggio C.C."/>
            <person name="Gruber A."/>
            <person name="Katsuyama A.M."/>
            <person name="Kishi L.T."/>
            <person name="Leite R.P."/>
            <person name="Lemos E.G.M."/>
            <person name="Lemos M.V.F."/>
            <person name="Locali E.C."/>
            <person name="Machado M.A."/>
            <person name="Madeira A.M.B.N."/>
            <person name="Martinez-Rossi N.M."/>
            <person name="Martins E.C."/>
            <person name="Meidanis J."/>
            <person name="Menck C.F.M."/>
            <person name="Miyaki C.Y."/>
            <person name="Moon D.H."/>
            <person name="Moreira L.M."/>
            <person name="Novo M.T.M."/>
            <person name="Okura V.K."/>
            <person name="Oliveira M.C."/>
            <person name="Oliveira V.R."/>
            <person name="Pereira H.A."/>
            <person name="Rossi A."/>
            <person name="Sena J.A.D."/>
            <person name="Silva C."/>
            <person name="de Souza R.F."/>
            <person name="Spinola L.A.F."/>
            <person name="Takita M.A."/>
            <person name="Tamura R.E."/>
            <person name="Teixeira E.C."/>
            <person name="Tezza R.I.D."/>
            <person name="Trindade dos Santos M."/>
            <person name="Truffi D."/>
            <person name="Tsai S.M."/>
            <person name="White F.F."/>
            <person name="Setubal J.C."/>
            <person name="Kitajima J.P."/>
        </authorList>
    </citation>
    <scope>NUCLEOTIDE SEQUENCE [LARGE SCALE GENOMIC DNA]</scope>
    <source>
        <strain>ATCC 33913 / DSM 3586 / NCPPB 528 / LMG 568 / P 25</strain>
    </source>
</reference>
<accession>Q8P8M6</accession>
<feature type="chain" id="PRO_0000099996" description="Ribosomal large subunit pseudouridine synthase B">
    <location>
        <begin position="1"/>
        <end position="492"/>
    </location>
</feature>
<feature type="domain" description="S4 RNA-binding" evidence="2">
    <location>
        <begin position="28"/>
        <end position="97"/>
    </location>
</feature>
<feature type="region of interest" description="Disordered" evidence="3">
    <location>
        <begin position="1"/>
        <end position="24"/>
    </location>
</feature>
<feature type="region of interest" description="Disordered" evidence="3">
    <location>
        <begin position="294"/>
        <end position="492"/>
    </location>
</feature>
<feature type="compositionally biased region" description="Basic and acidic residues" evidence="3">
    <location>
        <begin position="15"/>
        <end position="24"/>
    </location>
</feature>
<feature type="compositionally biased region" description="Basic and acidic residues" evidence="3">
    <location>
        <begin position="317"/>
        <end position="334"/>
    </location>
</feature>
<feature type="compositionally biased region" description="Gly residues" evidence="3">
    <location>
        <begin position="420"/>
        <end position="447"/>
    </location>
</feature>
<feature type="active site" description="Nucleophile" evidence="1">
    <location>
        <position position="132"/>
    </location>
</feature>
<evidence type="ECO:0000250" key="1"/>
<evidence type="ECO:0000255" key="2">
    <source>
        <dbReference type="PROSITE-ProRule" id="PRU00182"/>
    </source>
</evidence>
<evidence type="ECO:0000256" key="3">
    <source>
        <dbReference type="SAM" id="MobiDB-lite"/>
    </source>
</evidence>
<evidence type="ECO:0000305" key="4"/>
<comment type="function">
    <text evidence="1">Responsible for synthesis of pseudouridine from uracil-2605 in 23S ribosomal RNA.</text>
</comment>
<comment type="catalytic activity">
    <reaction>
        <text>uridine(2605) in 23S rRNA = pseudouridine(2605) in 23S rRNA</text>
        <dbReference type="Rhea" id="RHEA:42520"/>
        <dbReference type="Rhea" id="RHEA-COMP:10095"/>
        <dbReference type="Rhea" id="RHEA-COMP:10096"/>
        <dbReference type="ChEBI" id="CHEBI:65314"/>
        <dbReference type="ChEBI" id="CHEBI:65315"/>
        <dbReference type="EC" id="5.4.99.22"/>
    </reaction>
</comment>
<comment type="similarity">
    <text evidence="4">Belongs to the pseudouridine synthase RsuA family.</text>
</comment>
<dbReference type="EC" id="5.4.99.22"/>
<dbReference type="EMBL" id="AE008922">
    <property type="protein sequence ID" value="AAM41494.1"/>
    <property type="molecule type" value="Genomic_DNA"/>
</dbReference>
<dbReference type="RefSeq" id="NP_637570.1">
    <property type="nucleotide sequence ID" value="NC_003902.1"/>
</dbReference>
<dbReference type="SMR" id="Q8P8M6"/>
<dbReference type="STRING" id="190485.XCC2214"/>
<dbReference type="EnsemblBacteria" id="AAM41494">
    <property type="protein sequence ID" value="AAM41494"/>
    <property type="gene ID" value="XCC2214"/>
</dbReference>
<dbReference type="KEGG" id="xcc:XCC2214"/>
<dbReference type="PATRIC" id="fig|190485.4.peg.2363"/>
<dbReference type="eggNOG" id="COG1187">
    <property type="taxonomic scope" value="Bacteria"/>
</dbReference>
<dbReference type="HOGENOM" id="CLU_024979_5_2_6"/>
<dbReference type="OrthoDB" id="9807213at2"/>
<dbReference type="Proteomes" id="UP000001010">
    <property type="component" value="Chromosome"/>
</dbReference>
<dbReference type="GO" id="GO:0160139">
    <property type="term" value="F:23S rRNA pseudouridine(2605) synthase activity"/>
    <property type="evidence" value="ECO:0007669"/>
    <property type="project" value="UniProtKB-EC"/>
</dbReference>
<dbReference type="GO" id="GO:0003723">
    <property type="term" value="F:RNA binding"/>
    <property type="evidence" value="ECO:0007669"/>
    <property type="project" value="UniProtKB-KW"/>
</dbReference>
<dbReference type="GO" id="GO:0000455">
    <property type="term" value="P:enzyme-directed rRNA pseudouridine synthesis"/>
    <property type="evidence" value="ECO:0007669"/>
    <property type="project" value="UniProtKB-ARBA"/>
</dbReference>
<dbReference type="CDD" id="cd00165">
    <property type="entry name" value="S4"/>
    <property type="match status" value="1"/>
</dbReference>
<dbReference type="FunFam" id="3.30.70.1560:FF:000001">
    <property type="entry name" value="Pseudouridine synthase"/>
    <property type="match status" value="1"/>
</dbReference>
<dbReference type="FunFam" id="3.30.70.580:FF:000009">
    <property type="entry name" value="Pseudouridine synthase"/>
    <property type="match status" value="1"/>
</dbReference>
<dbReference type="Gene3D" id="3.30.70.1560">
    <property type="entry name" value="Alpha-L RNA-binding motif"/>
    <property type="match status" value="1"/>
</dbReference>
<dbReference type="Gene3D" id="3.30.70.580">
    <property type="entry name" value="Pseudouridine synthase I, catalytic domain, N-terminal subdomain"/>
    <property type="match status" value="1"/>
</dbReference>
<dbReference type="Gene3D" id="3.10.290.10">
    <property type="entry name" value="RNA-binding S4 domain"/>
    <property type="match status" value="1"/>
</dbReference>
<dbReference type="InterPro" id="IPR042092">
    <property type="entry name" value="PsdUridine_s_RsuA/RluB/E/F_cat"/>
</dbReference>
<dbReference type="InterPro" id="IPR020103">
    <property type="entry name" value="PsdUridine_synth_cat_dom_sf"/>
</dbReference>
<dbReference type="InterPro" id="IPR006145">
    <property type="entry name" value="PsdUridine_synth_RsuA/RluA"/>
</dbReference>
<dbReference type="InterPro" id="IPR000748">
    <property type="entry name" value="PsdUridine_synth_RsuA/RluB/E/F"/>
</dbReference>
<dbReference type="InterPro" id="IPR018496">
    <property type="entry name" value="PsdUridine_synth_RsuA/RluB_CS"/>
</dbReference>
<dbReference type="InterPro" id="IPR050343">
    <property type="entry name" value="RsuA_PseudoU_synthase"/>
</dbReference>
<dbReference type="InterPro" id="IPR002942">
    <property type="entry name" value="S4_RNA-bd"/>
</dbReference>
<dbReference type="InterPro" id="IPR036986">
    <property type="entry name" value="S4_RNA-bd_sf"/>
</dbReference>
<dbReference type="InterPro" id="IPR020094">
    <property type="entry name" value="TruA/RsuA/RluB/E/F_N"/>
</dbReference>
<dbReference type="NCBIfam" id="TIGR00093">
    <property type="entry name" value="pseudouridine synthase"/>
    <property type="match status" value="1"/>
</dbReference>
<dbReference type="PANTHER" id="PTHR47683">
    <property type="entry name" value="PSEUDOURIDINE SYNTHASE FAMILY PROTEIN-RELATED"/>
    <property type="match status" value="1"/>
</dbReference>
<dbReference type="PANTHER" id="PTHR47683:SF3">
    <property type="entry name" value="RIBOSOMAL LARGE SUBUNIT PSEUDOURIDINE SYNTHASE B"/>
    <property type="match status" value="1"/>
</dbReference>
<dbReference type="Pfam" id="PF00849">
    <property type="entry name" value="PseudoU_synth_2"/>
    <property type="match status" value="1"/>
</dbReference>
<dbReference type="Pfam" id="PF01479">
    <property type="entry name" value="S4"/>
    <property type="match status" value="1"/>
</dbReference>
<dbReference type="SMART" id="SM00363">
    <property type="entry name" value="S4"/>
    <property type="match status" value="1"/>
</dbReference>
<dbReference type="SUPFAM" id="SSF55174">
    <property type="entry name" value="Alpha-L RNA-binding motif"/>
    <property type="match status" value="1"/>
</dbReference>
<dbReference type="SUPFAM" id="SSF55120">
    <property type="entry name" value="Pseudouridine synthase"/>
    <property type="match status" value="1"/>
</dbReference>
<dbReference type="PROSITE" id="PS01149">
    <property type="entry name" value="PSI_RSU"/>
    <property type="match status" value="1"/>
</dbReference>
<dbReference type="PROSITE" id="PS50889">
    <property type="entry name" value="S4"/>
    <property type="match status" value="1"/>
</dbReference>
<name>RLUB_XANCP</name>
<proteinExistence type="inferred from homology"/>
<gene>
    <name type="primary">rluB</name>
    <name type="ordered locus">XCC2214</name>
</gene>